<organism>
    <name type="scientific">Human cytomegalovirus (strain AD169)</name>
    <name type="common">HHV-5</name>
    <name type="synonym">Human herpesvirus 5</name>
    <dbReference type="NCBI Taxonomy" id="10360"/>
    <lineage>
        <taxon>Viruses</taxon>
        <taxon>Duplodnaviria</taxon>
        <taxon>Heunggongvirae</taxon>
        <taxon>Peploviricota</taxon>
        <taxon>Herviviricetes</taxon>
        <taxon>Herpesvirales</taxon>
        <taxon>Orthoherpesviridae</taxon>
        <taxon>Betaherpesvirinae</taxon>
        <taxon>Cytomegalovirus</taxon>
        <taxon>Cytomegalovirus humanbeta5</taxon>
        <taxon>Human cytomegalovirus</taxon>
    </lineage>
</organism>
<name>US29_HCMVA</name>
<dbReference type="EMBL" id="X17403">
    <property type="protein sequence ID" value="CAA35261.1"/>
    <property type="molecule type" value="Genomic_DNA"/>
</dbReference>
<dbReference type="EMBL" id="X04650">
    <property type="protein sequence ID" value="CAA28339.1"/>
    <property type="molecule type" value="Genomic_DNA"/>
</dbReference>
<dbReference type="EMBL" id="BK000394">
    <property type="protein sequence ID" value="DAA00216.1"/>
    <property type="molecule type" value="Genomic_DNA"/>
</dbReference>
<dbReference type="PIR" id="D27216">
    <property type="entry name" value="QQBED4"/>
</dbReference>
<dbReference type="Proteomes" id="UP000008991">
    <property type="component" value="Segment"/>
</dbReference>
<dbReference type="Proteomes" id="UP000008992">
    <property type="component" value="Segment"/>
</dbReference>
<dbReference type="GO" id="GO:0033644">
    <property type="term" value="C:host cell membrane"/>
    <property type="evidence" value="ECO:0007669"/>
    <property type="project" value="UniProtKB-SubCell"/>
</dbReference>
<dbReference type="GO" id="GO:0016020">
    <property type="term" value="C:membrane"/>
    <property type="evidence" value="ECO:0007669"/>
    <property type="project" value="UniProtKB-KW"/>
</dbReference>
<keyword id="KW-1043">Host membrane</keyword>
<keyword id="KW-0472">Membrane</keyword>
<keyword id="KW-1185">Reference proteome</keyword>
<keyword id="KW-0812">Transmembrane</keyword>
<keyword id="KW-1133">Transmembrane helix</keyword>
<comment type="subcellular location">
    <subcellularLocation>
        <location evidence="2">Host membrane</location>
        <topology evidence="2">Multi-pass membrane protein</topology>
    </subcellularLocation>
</comment>
<comment type="similarity">
    <text evidence="2">Belongs to the HHV-5 US29 protein family.</text>
</comment>
<protein>
    <recommendedName>
        <fullName>Uncharacterized protein HHRF4</fullName>
    </recommendedName>
</protein>
<gene>
    <name type="primary">US29</name>
</gene>
<reference key="1">
    <citation type="journal article" date="1986" name="J. Mol. Biol.">
        <title>Sequence of the short unique region, short repeats, and part of the long repeats of human cytomegalovirus.</title>
        <authorList>
            <person name="Weston K.M."/>
            <person name="Barrell B.G."/>
        </authorList>
    </citation>
    <scope>NUCLEOTIDE SEQUENCE [GENOMIC DNA]</scope>
</reference>
<reference key="2">
    <citation type="journal article" date="1990" name="Curr. Top. Microbiol. Immunol.">
        <title>Analysis of the protein-coding content of the sequence of human cytomegalovirus strain AD169.</title>
        <authorList>
            <person name="Chee M.S."/>
            <person name="Bankier A.T."/>
            <person name="Beck S."/>
            <person name="Bohni R."/>
            <person name="Brown C.M."/>
            <person name="Cerny R."/>
            <person name="Horsnell T."/>
            <person name="Hutchison C.A. III"/>
            <person name="Kouzarides T."/>
            <person name="Martignetti J.A."/>
            <person name="Preddie E."/>
            <person name="Satchwell S.C."/>
            <person name="Tomlinson P."/>
            <person name="Weston K.M."/>
            <person name="Barrell B.G."/>
        </authorList>
    </citation>
    <scope>NUCLEOTIDE SEQUENCE [LARGE SCALE GENOMIC DNA]</scope>
</reference>
<reference key="3">
    <citation type="journal article" date="2003" name="J. Gen. Virol.">
        <title>The human cytomegalovirus genome revisited: comparison with the chimpanzee cytomegalovirus genome.</title>
        <authorList>
            <person name="Davison A.J."/>
            <person name="Dolan A."/>
            <person name="Akter P."/>
            <person name="Addison C."/>
            <person name="Dargan D.J."/>
            <person name="Alcendor D.J."/>
            <person name="McGeoch D.J."/>
            <person name="Hayward G.S."/>
        </authorList>
    </citation>
    <scope>GENOME REANNOTATION</scope>
</reference>
<reference key="4">
    <citation type="journal article" date="2003" name="J. Gen. Virol.">
        <authorList>
            <person name="Davison A.J."/>
            <person name="Dolan A."/>
            <person name="Akter P."/>
            <person name="Addison C."/>
            <person name="Dargan D.J."/>
            <person name="Alcendor D.J."/>
            <person name="McGeoch D.J."/>
            <person name="Hayward G.S."/>
        </authorList>
    </citation>
    <scope>ERRATUM OF PUBMED:12533697</scope>
</reference>
<sequence>MRCFRWWLYSGWWWLTFGCARTVTVGFVAPTVRAQSTVVRSEPAPPSETRRDNNDTSYFSSTSFHSSVSPATSVDRQFRRTTYDRWDGRRWLRTRYGNASACVTGTQWSTNFFFSQCEHYPSFVKLNGVQRWTPVRRPMGEVAYYGGCCMVGGGNRAYVILVSGYGTASYGNALRVNFGRGNCTAPKRTYPRRLELHDGRTDPSRCDPYQVYFYGLQCPEQLVITAHGGVGMRRCPTGSRPTPSRPHRHDLENELHGLCVDLLVCVLLLALLLLELVPMEAVRHPLLFWRRVALSPSTSKVDRAVKLCLRRMFGLPPPPSVAPPGEKKELPAQAALSPPLTTWSLPPFPSTRIPDSPPPPYQLRHATSLVTVPTLLLYTSSDIGDTASETTCVAHATYGEPPEPARSTATVQECTVLTAPNCGIVNNDGAVSEGQDHGDAVHHSLDVVSQCAADTGVVDTSE</sequence>
<evidence type="ECO:0000255" key="1"/>
<evidence type="ECO:0000305" key="2"/>
<accession>P09705</accession>
<accession>Q7M6H2</accession>
<feature type="chain" id="PRO_0000115289" description="Uncharacterized protein HHRF4">
    <location>
        <begin position="1"/>
        <end position="462"/>
    </location>
</feature>
<feature type="transmembrane region" description="Helical" evidence="1">
    <location>
        <begin position="12"/>
        <end position="32"/>
    </location>
</feature>
<feature type="transmembrane region" description="Helical" evidence="1">
    <location>
        <begin position="257"/>
        <end position="277"/>
    </location>
</feature>
<organismHost>
    <name type="scientific">Homo sapiens</name>
    <name type="common">Human</name>
    <dbReference type="NCBI Taxonomy" id="9606"/>
</organismHost>
<proteinExistence type="inferred from homology"/>